<gene>
    <name evidence="1" type="primary">tfe</name>
    <name type="synonym">tfa1</name>
    <name type="ordered locus">MK0495</name>
</gene>
<protein>
    <recommendedName>
        <fullName evidence="1">Transcription factor E</fullName>
        <shortName evidence="1">TFE</shortName>
    </recommendedName>
    <alternativeName>
        <fullName evidence="1">TFIIE subunit alpha homolog</fullName>
    </alternativeName>
    <alternativeName>
        <fullName evidence="1">Transcription initiation factor TFIIE</fullName>
    </alternativeName>
</protein>
<dbReference type="EMBL" id="AE009439">
    <property type="protein sequence ID" value="AAM01710.1"/>
    <property type="status" value="ALT_INIT"/>
    <property type="molecule type" value="Genomic_DNA"/>
</dbReference>
<dbReference type="RefSeq" id="WP_158295895.1">
    <property type="nucleotide sequence ID" value="NC_003551.1"/>
</dbReference>
<dbReference type="SMR" id="Q8TY11"/>
<dbReference type="FunCoup" id="Q8TY11">
    <property type="interactions" value="7"/>
</dbReference>
<dbReference type="STRING" id="190192.MK0495"/>
<dbReference type="PaxDb" id="190192-MK0495"/>
<dbReference type="EnsemblBacteria" id="AAM01710">
    <property type="protein sequence ID" value="AAM01710"/>
    <property type="gene ID" value="MK0495"/>
</dbReference>
<dbReference type="GeneID" id="1476596"/>
<dbReference type="KEGG" id="mka:MK0495"/>
<dbReference type="HOGENOM" id="CLU_100097_0_0_2"/>
<dbReference type="InParanoid" id="Q8TY11"/>
<dbReference type="OrthoDB" id="5935at2157"/>
<dbReference type="Proteomes" id="UP000001826">
    <property type="component" value="Chromosome"/>
</dbReference>
<dbReference type="GO" id="GO:0003677">
    <property type="term" value="F:DNA binding"/>
    <property type="evidence" value="ECO:0007669"/>
    <property type="project" value="UniProtKB-KW"/>
</dbReference>
<dbReference type="GO" id="GO:0006355">
    <property type="term" value="P:regulation of DNA-templated transcription"/>
    <property type="evidence" value="ECO:0007669"/>
    <property type="project" value="InterPro"/>
</dbReference>
<dbReference type="GO" id="GO:0006367">
    <property type="term" value="P:transcription initiation at RNA polymerase II promoter"/>
    <property type="evidence" value="ECO:0007669"/>
    <property type="project" value="InterPro"/>
</dbReference>
<dbReference type="Gene3D" id="1.10.10.10">
    <property type="entry name" value="Winged helix-like DNA-binding domain superfamily/Winged helix DNA-binding domain"/>
    <property type="match status" value="1"/>
</dbReference>
<dbReference type="HAMAP" id="MF_01909">
    <property type="entry name" value="TFE_arch"/>
    <property type="match status" value="1"/>
</dbReference>
<dbReference type="InterPro" id="IPR016481">
    <property type="entry name" value="TF_E_archaea"/>
</dbReference>
<dbReference type="InterPro" id="IPR017919">
    <property type="entry name" value="TFIIE/TFIIEa_HTH"/>
</dbReference>
<dbReference type="InterPro" id="IPR002853">
    <property type="entry name" value="TFIIE_asu"/>
</dbReference>
<dbReference type="InterPro" id="IPR024550">
    <property type="entry name" value="TFIIEa/SarR/Rpc3_HTH_dom"/>
</dbReference>
<dbReference type="InterPro" id="IPR036388">
    <property type="entry name" value="WH-like_DNA-bd_sf"/>
</dbReference>
<dbReference type="InterPro" id="IPR036390">
    <property type="entry name" value="WH_DNA-bd_sf"/>
</dbReference>
<dbReference type="Pfam" id="PF02002">
    <property type="entry name" value="TFIIE_alpha"/>
    <property type="match status" value="1"/>
</dbReference>
<dbReference type="PIRSF" id="PIRSF006373">
    <property type="entry name" value="TF_E_archaea"/>
    <property type="match status" value="1"/>
</dbReference>
<dbReference type="SMART" id="SM00531">
    <property type="entry name" value="TFIIE"/>
    <property type="match status" value="1"/>
</dbReference>
<dbReference type="SUPFAM" id="SSF46785">
    <property type="entry name" value="Winged helix' DNA-binding domain"/>
    <property type="match status" value="1"/>
</dbReference>
<dbReference type="PROSITE" id="PS51344">
    <property type="entry name" value="HTH_TFE_IIE"/>
    <property type="match status" value="1"/>
</dbReference>
<keyword id="KW-0238">DNA-binding</keyword>
<keyword id="KW-1185">Reference proteome</keyword>
<keyword id="KW-0804">Transcription</keyword>
<keyword id="KW-0805">Transcription regulation</keyword>
<feature type="chain" id="PRO_0000326605" description="Transcription factor E">
    <location>
        <begin position="1"/>
        <end position="188"/>
    </location>
</feature>
<feature type="domain" description="HTH TFE/IIEalpha-type" evidence="1">
    <location>
        <begin position="9"/>
        <end position="98"/>
    </location>
</feature>
<evidence type="ECO:0000255" key="1">
    <source>
        <dbReference type="HAMAP-Rule" id="MF_01909"/>
    </source>
</evidence>
<evidence type="ECO:0000305" key="2"/>
<sequence>MYAELGEEDLEVLRDVTLSLLDSEKGVDPEVAKRTVDVILKREAIDEEIAEELGVDPREVRKVLYKLHERGVVTFRKERREEYRYPVYSWRLNLREVLRRCLEERRRELEEVERALSNDMSHPMFHCGNDDCPRMSFEEAMEHEFRCPKCGEVLEEVDLTEERRELERLAEELKVEIRRLEELRERLG</sequence>
<comment type="function">
    <text evidence="1">Transcription factor that plays a role in the activation of archaeal genes transcribed by RNA polymerase. Facilitates transcription initiation by enhancing TATA-box recognition by TATA-box-binding protein (Tbp), and transcription factor B (Tfb) and RNA polymerase recruitment. Not absolutely required for transcription in vitro, but particularly important in cases where Tbp or Tfb function is not optimal. It dynamically alters the nucleic acid-binding properties of RNA polymerases by stabilizing the initiation complex and destabilizing elongation complexes. Seems to translocate with the RNA polymerase following initiation and acts by binding to the non template strand of the transcription bubble in elongation complexes.</text>
</comment>
<comment type="subunit">
    <text evidence="1">Monomer. Interaction with RNA polymerase subunits RpoF and RpoE is necessary for Tfe stimulatory transcription activity. Able to interact with Tbp and RNA polymerase in the absence of DNA promoter. Interacts both with the preinitiation and elongation complexes.</text>
</comment>
<comment type="domain">
    <text evidence="1">The winged helix domain is involved in binding to DNA in the preinitiation complex.</text>
</comment>
<comment type="similarity">
    <text evidence="1">Belongs to the TFE family.</text>
</comment>
<comment type="sequence caution" evidence="2">
    <conflict type="erroneous initiation">
        <sequence resource="EMBL-CDS" id="AAM01710"/>
    </conflict>
</comment>
<proteinExistence type="inferred from homology"/>
<accession>Q8TY11</accession>
<name>TFE_METKA</name>
<organism>
    <name type="scientific">Methanopyrus kandleri (strain AV19 / DSM 6324 / JCM 9639 / NBRC 100938)</name>
    <dbReference type="NCBI Taxonomy" id="190192"/>
    <lineage>
        <taxon>Archaea</taxon>
        <taxon>Methanobacteriati</taxon>
        <taxon>Methanobacteriota</taxon>
        <taxon>Methanomada group</taxon>
        <taxon>Methanopyri</taxon>
        <taxon>Methanopyrales</taxon>
        <taxon>Methanopyraceae</taxon>
        <taxon>Methanopyrus</taxon>
    </lineage>
</organism>
<reference key="1">
    <citation type="journal article" date="2002" name="Proc. Natl. Acad. Sci. U.S.A.">
        <title>The complete genome of hyperthermophile Methanopyrus kandleri AV19 and monophyly of archaeal methanogens.</title>
        <authorList>
            <person name="Slesarev A.I."/>
            <person name="Mezhevaya K.V."/>
            <person name="Makarova K.S."/>
            <person name="Polushin N.N."/>
            <person name="Shcherbinina O.V."/>
            <person name="Shakhova V.V."/>
            <person name="Belova G.I."/>
            <person name="Aravind L."/>
            <person name="Natale D.A."/>
            <person name="Rogozin I.B."/>
            <person name="Tatusov R.L."/>
            <person name="Wolf Y.I."/>
            <person name="Stetter K.O."/>
            <person name="Malykh A.G."/>
            <person name="Koonin E.V."/>
            <person name="Kozyavkin S.A."/>
        </authorList>
    </citation>
    <scope>NUCLEOTIDE SEQUENCE [LARGE SCALE GENOMIC DNA]</scope>
    <source>
        <strain>AV19 / DSM 6324 / JCM 9639 / NBRC 100938</strain>
    </source>
</reference>